<gene>
    <name type="ordered locus">Sputw3181_1707</name>
</gene>
<keyword id="KW-0963">Cytoplasm</keyword>
<keyword id="KW-0238">DNA-binding</keyword>
<feature type="chain" id="PRO_1000003824" description="Nucleoid-associated protein Sputw3181_1707">
    <location>
        <begin position="1"/>
        <end position="109"/>
    </location>
</feature>
<proteinExistence type="inferred from homology"/>
<name>Y1707_SHESW</name>
<sequence>MFGKGGMGNLMKQAQMMQEKMAKMQEEIARMEMVGESGAGLVKVTMTGAHTVRKVEIDPSLMEDDKEMLEDLIAAACNDAARRIEENQKAKMAEVTGGMQLPPGMKMPF</sequence>
<protein>
    <recommendedName>
        <fullName evidence="1">Nucleoid-associated protein Sputw3181_1707</fullName>
    </recommendedName>
</protein>
<reference key="1">
    <citation type="submission" date="2006-12" db="EMBL/GenBank/DDBJ databases">
        <title>Complete sequence of Shewanella sp. W3-18-1.</title>
        <authorList>
            <consortium name="US DOE Joint Genome Institute"/>
            <person name="Copeland A."/>
            <person name="Lucas S."/>
            <person name="Lapidus A."/>
            <person name="Barry K."/>
            <person name="Detter J.C."/>
            <person name="Glavina del Rio T."/>
            <person name="Hammon N."/>
            <person name="Israni S."/>
            <person name="Dalin E."/>
            <person name="Tice H."/>
            <person name="Pitluck S."/>
            <person name="Chain P."/>
            <person name="Malfatti S."/>
            <person name="Shin M."/>
            <person name="Vergez L."/>
            <person name="Schmutz J."/>
            <person name="Larimer F."/>
            <person name="Land M."/>
            <person name="Hauser L."/>
            <person name="Kyrpides N."/>
            <person name="Lykidis A."/>
            <person name="Tiedje J."/>
            <person name="Richardson P."/>
        </authorList>
    </citation>
    <scope>NUCLEOTIDE SEQUENCE [LARGE SCALE GENOMIC DNA]</scope>
    <source>
        <strain>W3-18-1</strain>
    </source>
</reference>
<evidence type="ECO:0000255" key="1">
    <source>
        <dbReference type="HAMAP-Rule" id="MF_00274"/>
    </source>
</evidence>
<comment type="function">
    <text evidence="1">Binds to DNA and alters its conformation. May be involved in regulation of gene expression, nucleoid organization and DNA protection.</text>
</comment>
<comment type="subunit">
    <text evidence="1">Homodimer.</text>
</comment>
<comment type="subcellular location">
    <subcellularLocation>
        <location evidence="1">Cytoplasm</location>
        <location evidence="1">Nucleoid</location>
    </subcellularLocation>
</comment>
<comment type="similarity">
    <text evidence="1">Belongs to the YbaB/EbfC family.</text>
</comment>
<dbReference type="EMBL" id="CP000503">
    <property type="protein sequence ID" value="ABM24544.1"/>
    <property type="molecule type" value="Genomic_DNA"/>
</dbReference>
<dbReference type="RefSeq" id="WP_007648738.1">
    <property type="nucleotide sequence ID" value="NC_008750.1"/>
</dbReference>
<dbReference type="SMR" id="A1RIP9"/>
<dbReference type="KEGG" id="shw:Sputw3181_1707"/>
<dbReference type="HOGENOM" id="CLU_140930_0_0_6"/>
<dbReference type="Proteomes" id="UP000002597">
    <property type="component" value="Chromosome"/>
</dbReference>
<dbReference type="GO" id="GO:0043590">
    <property type="term" value="C:bacterial nucleoid"/>
    <property type="evidence" value="ECO:0007669"/>
    <property type="project" value="UniProtKB-UniRule"/>
</dbReference>
<dbReference type="GO" id="GO:0005829">
    <property type="term" value="C:cytosol"/>
    <property type="evidence" value="ECO:0007669"/>
    <property type="project" value="TreeGrafter"/>
</dbReference>
<dbReference type="GO" id="GO:0003677">
    <property type="term" value="F:DNA binding"/>
    <property type="evidence" value="ECO:0007669"/>
    <property type="project" value="UniProtKB-UniRule"/>
</dbReference>
<dbReference type="FunFam" id="3.30.1310.10:FF:000001">
    <property type="entry name" value="Nucleoid-associated protein YbaB"/>
    <property type="match status" value="1"/>
</dbReference>
<dbReference type="Gene3D" id="3.30.1310.10">
    <property type="entry name" value="Nucleoid-associated protein YbaB-like domain"/>
    <property type="match status" value="1"/>
</dbReference>
<dbReference type="HAMAP" id="MF_00274">
    <property type="entry name" value="DNA_YbaB_EbfC"/>
    <property type="match status" value="1"/>
</dbReference>
<dbReference type="InterPro" id="IPR036894">
    <property type="entry name" value="YbaB-like_sf"/>
</dbReference>
<dbReference type="InterPro" id="IPR004401">
    <property type="entry name" value="YbaB/EbfC"/>
</dbReference>
<dbReference type="NCBIfam" id="TIGR00103">
    <property type="entry name" value="DNA_YbaB_EbfC"/>
    <property type="match status" value="1"/>
</dbReference>
<dbReference type="PANTHER" id="PTHR33449">
    <property type="entry name" value="NUCLEOID-ASSOCIATED PROTEIN YBAB"/>
    <property type="match status" value="1"/>
</dbReference>
<dbReference type="PANTHER" id="PTHR33449:SF1">
    <property type="entry name" value="NUCLEOID-ASSOCIATED PROTEIN YBAB"/>
    <property type="match status" value="1"/>
</dbReference>
<dbReference type="Pfam" id="PF02575">
    <property type="entry name" value="YbaB_DNA_bd"/>
    <property type="match status" value="1"/>
</dbReference>
<dbReference type="PIRSF" id="PIRSF004555">
    <property type="entry name" value="UCP004555"/>
    <property type="match status" value="1"/>
</dbReference>
<dbReference type="SUPFAM" id="SSF82607">
    <property type="entry name" value="YbaB-like"/>
    <property type="match status" value="1"/>
</dbReference>
<accession>A1RIP9</accession>
<organism>
    <name type="scientific">Shewanella sp. (strain W3-18-1)</name>
    <dbReference type="NCBI Taxonomy" id="351745"/>
    <lineage>
        <taxon>Bacteria</taxon>
        <taxon>Pseudomonadati</taxon>
        <taxon>Pseudomonadota</taxon>
        <taxon>Gammaproteobacteria</taxon>
        <taxon>Alteromonadales</taxon>
        <taxon>Shewanellaceae</taxon>
        <taxon>Shewanella</taxon>
    </lineage>
</organism>